<name>AROA_WOLSU</name>
<feature type="chain" id="PRO_0000325400" description="3-phosphoshikimate 1-carboxyvinyltransferase">
    <location>
        <begin position="1"/>
        <end position="437"/>
    </location>
</feature>
<feature type="active site" description="Proton acceptor" evidence="1">
    <location>
        <position position="317"/>
    </location>
</feature>
<feature type="binding site" evidence="1">
    <location>
        <position position="24"/>
    </location>
    <ligand>
        <name>3-phosphoshikimate</name>
        <dbReference type="ChEBI" id="CHEBI:145989"/>
    </ligand>
</feature>
<feature type="binding site" evidence="1">
    <location>
        <position position="24"/>
    </location>
    <ligand>
        <name>phosphoenolpyruvate</name>
        <dbReference type="ChEBI" id="CHEBI:58702"/>
    </ligand>
</feature>
<feature type="binding site" evidence="1">
    <location>
        <position position="25"/>
    </location>
    <ligand>
        <name>3-phosphoshikimate</name>
        <dbReference type="ChEBI" id="CHEBI:145989"/>
    </ligand>
</feature>
<feature type="binding site" evidence="1">
    <location>
        <position position="29"/>
    </location>
    <ligand>
        <name>3-phosphoshikimate</name>
        <dbReference type="ChEBI" id="CHEBI:145989"/>
    </ligand>
</feature>
<feature type="binding site" evidence="1">
    <location>
        <position position="95"/>
    </location>
    <ligand>
        <name>phosphoenolpyruvate</name>
        <dbReference type="ChEBI" id="CHEBI:58702"/>
    </ligand>
</feature>
<feature type="binding site" evidence="1">
    <location>
        <position position="123"/>
    </location>
    <ligand>
        <name>phosphoenolpyruvate</name>
        <dbReference type="ChEBI" id="CHEBI:58702"/>
    </ligand>
</feature>
<feature type="binding site" evidence="1">
    <location>
        <position position="168"/>
    </location>
    <ligand>
        <name>3-phosphoshikimate</name>
        <dbReference type="ChEBI" id="CHEBI:145989"/>
    </ligand>
</feature>
<feature type="binding site" evidence="1">
    <location>
        <position position="170"/>
    </location>
    <ligand>
        <name>3-phosphoshikimate</name>
        <dbReference type="ChEBI" id="CHEBI:145989"/>
    </ligand>
</feature>
<feature type="binding site" evidence="1">
    <location>
        <position position="170"/>
    </location>
    <ligand>
        <name>phosphoenolpyruvate</name>
        <dbReference type="ChEBI" id="CHEBI:58702"/>
    </ligand>
</feature>
<feature type="binding site" evidence="1">
    <location>
        <position position="317"/>
    </location>
    <ligand>
        <name>3-phosphoshikimate</name>
        <dbReference type="ChEBI" id="CHEBI:145989"/>
    </ligand>
</feature>
<feature type="binding site" evidence="1">
    <location>
        <position position="344"/>
    </location>
    <ligand>
        <name>3-phosphoshikimate</name>
        <dbReference type="ChEBI" id="CHEBI:145989"/>
    </ligand>
</feature>
<feature type="binding site" evidence="1">
    <location>
        <position position="348"/>
    </location>
    <ligand>
        <name>phosphoenolpyruvate</name>
        <dbReference type="ChEBI" id="CHEBI:58702"/>
    </ligand>
</feature>
<feature type="binding site" evidence="1">
    <location>
        <position position="390"/>
    </location>
    <ligand>
        <name>phosphoenolpyruvate</name>
        <dbReference type="ChEBI" id="CHEBI:58702"/>
    </ligand>
</feature>
<sequence>MRITQVTPLKEGFEIEIPNIASDKSISHRSAIFSLLSSSPARIHRYLQGEDTLHTLQIAQQLGLEVTKEGEGMVFTPPPSGIKEPFDVLDCGNAGTAIRLYVGLLAASKGYFVLNGDAYLRRRPMNRVVKPLQSVGAQIFGRDEGNLAPLTILGRPLAAFDYQSPIASAQVKSAMILAALQGEEASFFSEPERSRDHTERMLRGMGARIDEDQEGRLTLFPLLGKRLDPLEMTIPADPSSAFFFAVAAAIIPGARVKLQNVLLNPTRIEAFKVLESMGARLHYSITSETYETIGDIEVSHHTLQGITVSERISWLIDELPALAIAMALAQGKSRVQNAKELRVKESDRISVVVNNLRLLGVEVEEFEDGYEITGGTLQGGVTIDSHGDHRIAMSFALAGLVVPLTINDSACIDVSFPNFLEILSSIAKVIHESQTSR</sequence>
<keyword id="KW-0028">Amino-acid biosynthesis</keyword>
<keyword id="KW-0057">Aromatic amino acid biosynthesis</keyword>
<keyword id="KW-0963">Cytoplasm</keyword>
<keyword id="KW-1185">Reference proteome</keyword>
<keyword id="KW-0808">Transferase</keyword>
<proteinExistence type="inferred from homology"/>
<accession>Q7M8Y7</accession>
<dbReference type="EC" id="2.5.1.19" evidence="1"/>
<dbReference type="EMBL" id="BX571660">
    <property type="protein sequence ID" value="CAE10385.1"/>
    <property type="molecule type" value="Genomic_DNA"/>
</dbReference>
<dbReference type="RefSeq" id="WP_011139171.1">
    <property type="nucleotide sequence ID" value="NC_005090.1"/>
</dbReference>
<dbReference type="SMR" id="Q7M8Y7"/>
<dbReference type="STRING" id="273121.WS1309"/>
<dbReference type="KEGG" id="wsu:WS1309"/>
<dbReference type="eggNOG" id="COG0128">
    <property type="taxonomic scope" value="Bacteria"/>
</dbReference>
<dbReference type="HOGENOM" id="CLU_024321_0_1_7"/>
<dbReference type="UniPathway" id="UPA00053">
    <property type="reaction ID" value="UER00089"/>
</dbReference>
<dbReference type="Proteomes" id="UP000000422">
    <property type="component" value="Chromosome"/>
</dbReference>
<dbReference type="GO" id="GO:0005737">
    <property type="term" value="C:cytoplasm"/>
    <property type="evidence" value="ECO:0007669"/>
    <property type="project" value="UniProtKB-SubCell"/>
</dbReference>
<dbReference type="GO" id="GO:0003866">
    <property type="term" value="F:3-phosphoshikimate 1-carboxyvinyltransferase activity"/>
    <property type="evidence" value="ECO:0007669"/>
    <property type="project" value="UniProtKB-UniRule"/>
</dbReference>
<dbReference type="GO" id="GO:0008652">
    <property type="term" value="P:amino acid biosynthetic process"/>
    <property type="evidence" value="ECO:0007669"/>
    <property type="project" value="UniProtKB-KW"/>
</dbReference>
<dbReference type="GO" id="GO:0009073">
    <property type="term" value="P:aromatic amino acid family biosynthetic process"/>
    <property type="evidence" value="ECO:0007669"/>
    <property type="project" value="UniProtKB-KW"/>
</dbReference>
<dbReference type="GO" id="GO:0009423">
    <property type="term" value="P:chorismate biosynthetic process"/>
    <property type="evidence" value="ECO:0007669"/>
    <property type="project" value="UniProtKB-UniRule"/>
</dbReference>
<dbReference type="CDD" id="cd01556">
    <property type="entry name" value="EPSP_synthase"/>
    <property type="match status" value="1"/>
</dbReference>
<dbReference type="FunFam" id="3.65.10.10:FF:000005">
    <property type="entry name" value="3-phosphoshikimate 1-carboxyvinyltransferase"/>
    <property type="match status" value="1"/>
</dbReference>
<dbReference type="Gene3D" id="3.65.10.10">
    <property type="entry name" value="Enolpyruvate transferase domain"/>
    <property type="match status" value="2"/>
</dbReference>
<dbReference type="HAMAP" id="MF_00210">
    <property type="entry name" value="EPSP_synth"/>
    <property type="match status" value="1"/>
</dbReference>
<dbReference type="InterPro" id="IPR001986">
    <property type="entry name" value="Enolpyruvate_Tfrase_dom"/>
</dbReference>
<dbReference type="InterPro" id="IPR036968">
    <property type="entry name" value="Enolpyruvate_Tfrase_sf"/>
</dbReference>
<dbReference type="InterPro" id="IPR006264">
    <property type="entry name" value="EPSP_synthase"/>
</dbReference>
<dbReference type="InterPro" id="IPR023193">
    <property type="entry name" value="EPSP_synthase_CS"/>
</dbReference>
<dbReference type="InterPro" id="IPR013792">
    <property type="entry name" value="RNA3'P_cycl/enolpyr_Trfase_a/b"/>
</dbReference>
<dbReference type="NCBIfam" id="TIGR01356">
    <property type="entry name" value="aroA"/>
    <property type="match status" value="1"/>
</dbReference>
<dbReference type="PANTHER" id="PTHR21090">
    <property type="entry name" value="AROM/DEHYDROQUINATE SYNTHASE"/>
    <property type="match status" value="1"/>
</dbReference>
<dbReference type="PANTHER" id="PTHR21090:SF5">
    <property type="entry name" value="PENTAFUNCTIONAL AROM POLYPEPTIDE"/>
    <property type="match status" value="1"/>
</dbReference>
<dbReference type="Pfam" id="PF00275">
    <property type="entry name" value="EPSP_synthase"/>
    <property type="match status" value="1"/>
</dbReference>
<dbReference type="PIRSF" id="PIRSF000505">
    <property type="entry name" value="EPSPS"/>
    <property type="match status" value="1"/>
</dbReference>
<dbReference type="SUPFAM" id="SSF55205">
    <property type="entry name" value="EPT/RTPC-like"/>
    <property type="match status" value="1"/>
</dbReference>
<dbReference type="PROSITE" id="PS00104">
    <property type="entry name" value="EPSP_SYNTHASE_1"/>
    <property type="match status" value="1"/>
</dbReference>
<dbReference type="PROSITE" id="PS00885">
    <property type="entry name" value="EPSP_SYNTHASE_2"/>
    <property type="match status" value="1"/>
</dbReference>
<protein>
    <recommendedName>
        <fullName evidence="1">3-phosphoshikimate 1-carboxyvinyltransferase</fullName>
        <ecNumber evidence="1">2.5.1.19</ecNumber>
    </recommendedName>
    <alternativeName>
        <fullName evidence="1">5-enolpyruvylshikimate-3-phosphate synthase</fullName>
        <shortName evidence="1">EPSP synthase</shortName>
        <shortName evidence="1">EPSPS</shortName>
    </alternativeName>
</protein>
<organism>
    <name type="scientific">Wolinella succinogenes (strain ATCC 29543 / DSM 1740 / CCUG 13145 / JCM 31913 / LMG 7466 / NCTC 11488 / FDC 602W)</name>
    <name type="common">Vibrio succinogenes</name>
    <dbReference type="NCBI Taxonomy" id="273121"/>
    <lineage>
        <taxon>Bacteria</taxon>
        <taxon>Pseudomonadati</taxon>
        <taxon>Campylobacterota</taxon>
        <taxon>Epsilonproteobacteria</taxon>
        <taxon>Campylobacterales</taxon>
        <taxon>Helicobacteraceae</taxon>
        <taxon>Wolinella</taxon>
    </lineage>
</organism>
<gene>
    <name evidence="1" type="primary">aroA</name>
    <name type="ordered locus">WS1309</name>
</gene>
<comment type="function">
    <text evidence="1">Catalyzes the transfer of the enolpyruvyl moiety of phosphoenolpyruvate (PEP) to the 5-hydroxyl of shikimate-3-phosphate (S3P) to produce enolpyruvyl shikimate-3-phosphate and inorganic phosphate.</text>
</comment>
<comment type="catalytic activity">
    <reaction evidence="1">
        <text>3-phosphoshikimate + phosphoenolpyruvate = 5-O-(1-carboxyvinyl)-3-phosphoshikimate + phosphate</text>
        <dbReference type="Rhea" id="RHEA:21256"/>
        <dbReference type="ChEBI" id="CHEBI:43474"/>
        <dbReference type="ChEBI" id="CHEBI:57701"/>
        <dbReference type="ChEBI" id="CHEBI:58702"/>
        <dbReference type="ChEBI" id="CHEBI:145989"/>
        <dbReference type="EC" id="2.5.1.19"/>
    </reaction>
    <physiologicalReaction direction="left-to-right" evidence="1">
        <dbReference type="Rhea" id="RHEA:21257"/>
    </physiologicalReaction>
</comment>
<comment type="pathway">
    <text evidence="1">Metabolic intermediate biosynthesis; chorismate biosynthesis; chorismate from D-erythrose 4-phosphate and phosphoenolpyruvate: step 6/7.</text>
</comment>
<comment type="subunit">
    <text evidence="1">Monomer.</text>
</comment>
<comment type="subcellular location">
    <subcellularLocation>
        <location evidence="1">Cytoplasm</location>
    </subcellularLocation>
</comment>
<comment type="similarity">
    <text evidence="1">Belongs to the EPSP synthase family.</text>
</comment>
<reference key="1">
    <citation type="journal article" date="2003" name="Proc. Natl. Acad. Sci. U.S.A.">
        <title>Complete genome sequence and analysis of Wolinella succinogenes.</title>
        <authorList>
            <person name="Baar C."/>
            <person name="Eppinger M."/>
            <person name="Raddatz G."/>
            <person name="Simon J."/>
            <person name="Lanz C."/>
            <person name="Klimmek O."/>
            <person name="Nandakumar R."/>
            <person name="Gross R."/>
            <person name="Rosinus A."/>
            <person name="Keller H."/>
            <person name="Jagtap P."/>
            <person name="Linke B."/>
            <person name="Meyer F."/>
            <person name="Lederer H."/>
            <person name="Schuster S.C."/>
        </authorList>
    </citation>
    <scope>NUCLEOTIDE SEQUENCE [LARGE SCALE GENOMIC DNA]</scope>
    <source>
        <strain>ATCC 29543 / DSM 1740 / CCUG 13145 / JCM 31913 / LMG 7466 / NCTC 11488 / FDC 602W</strain>
    </source>
</reference>
<evidence type="ECO:0000255" key="1">
    <source>
        <dbReference type="HAMAP-Rule" id="MF_00210"/>
    </source>
</evidence>